<gene>
    <name evidence="1" type="primary">rlmH</name>
    <name type="ordered locus">MYPE5180</name>
</gene>
<proteinExistence type="inferred from homology"/>
<evidence type="ECO:0000255" key="1">
    <source>
        <dbReference type="HAMAP-Rule" id="MF_00658"/>
    </source>
</evidence>
<reference key="1">
    <citation type="journal article" date="2002" name="Nucleic Acids Res.">
        <title>The complete genomic sequence of Mycoplasma penetrans, an intracellular bacterial pathogen in humans.</title>
        <authorList>
            <person name="Sasaki Y."/>
            <person name="Ishikawa J."/>
            <person name="Yamashita A."/>
            <person name="Oshima K."/>
            <person name="Kenri T."/>
            <person name="Furuya K."/>
            <person name="Yoshino C."/>
            <person name="Horino A."/>
            <person name="Shiba T."/>
            <person name="Sasaki T."/>
            <person name="Hattori M."/>
        </authorList>
    </citation>
    <scope>NUCLEOTIDE SEQUENCE [LARGE SCALE GENOMIC DNA]</scope>
    <source>
        <strain>HF-2</strain>
    </source>
</reference>
<sequence>MKIKIICFGKIKDKNITALINEYLSKINHFTNLTIVELSEEKINNENSIGEIEEALKKESKKLIPYLENSFNVLLDIKGVQMDSIKFANSINQNLIISKDINFYIGSSHGISESIKNKFNLKLSFSELTFNHQIFRLILLEQIYRAFSILNNTKYHK</sequence>
<dbReference type="EC" id="2.1.1.177" evidence="1"/>
<dbReference type="EMBL" id="BA000026">
    <property type="protein sequence ID" value="BAC44308.1"/>
    <property type="molecule type" value="Genomic_DNA"/>
</dbReference>
<dbReference type="RefSeq" id="WP_011077342.1">
    <property type="nucleotide sequence ID" value="NC_004432.1"/>
</dbReference>
<dbReference type="SMR" id="Q8EVP2"/>
<dbReference type="FunCoup" id="Q8EVP2">
    <property type="interactions" value="95"/>
</dbReference>
<dbReference type="STRING" id="272633.gene:10731635"/>
<dbReference type="KEGG" id="mpe:MYPE5180"/>
<dbReference type="eggNOG" id="COG1576">
    <property type="taxonomic scope" value="Bacteria"/>
</dbReference>
<dbReference type="HOGENOM" id="CLU_100552_0_0_14"/>
<dbReference type="InParanoid" id="Q8EVP2"/>
<dbReference type="Proteomes" id="UP000002522">
    <property type="component" value="Chromosome"/>
</dbReference>
<dbReference type="GO" id="GO:0005737">
    <property type="term" value="C:cytoplasm"/>
    <property type="evidence" value="ECO:0007669"/>
    <property type="project" value="UniProtKB-SubCell"/>
</dbReference>
<dbReference type="GO" id="GO:0070038">
    <property type="term" value="F:rRNA (pseudouridine-N3-)-methyltransferase activity"/>
    <property type="evidence" value="ECO:0007669"/>
    <property type="project" value="UniProtKB-UniRule"/>
</dbReference>
<dbReference type="CDD" id="cd18081">
    <property type="entry name" value="RlmH-like"/>
    <property type="match status" value="1"/>
</dbReference>
<dbReference type="Gene3D" id="3.40.1280.10">
    <property type="match status" value="1"/>
</dbReference>
<dbReference type="HAMAP" id="MF_00658">
    <property type="entry name" value="23SrRNA_methyltr_H"/>
    <property type="match status" value="1"/>
</dbReference>
<dbReference type="InterPro" id="IPR029028">
    <property type="entry name" value="Alpha/beta_knot_MTases"/>
</dbReference>
<dbReference type="InterPro" id="IPR003742">
    <property type="entry name" value="RlmH-like"/>
</dbReference>
<dbReference type="InterPro" id="IPR029026">
    <property type="entry name" value="tRNA_m1G_MTases_N"/>
</dbReference>
<dbReference type="PANTHER" id="PTHR33603">
    <property type="entry name" value="METHYLTRANSFERASE"/>
    <property type="match status" value="1"/>
</dbReference>
<dbReference type="PANTHER" id="PTHR33603:SF1">
    <property type="entry name" value="RIBOSOMAL RNA LARGE SUBUNIT METHYLTRANSFERASE H"/>
    <property type="match status" value="1"/>
</dbReference>
<dbReference type="Pfam" id="PF02590">
    <property type="entry name" value="SPOUT_MTase"/>
    <property type="match status" value="1"/>
</dbReference>
<dbReference type="PIRSF" id="PIRSF004505">
    <property type="entry name" value="MT_bac"/>
    <property type="match status" value="1"/>
</dbReference>
<dbReference type="SUPFAM" id="SSF75217">
    <property type="entry name" value="alpha/beta knot"/>
    <property type="match status" value="1"/>
</dbReference>
<accession>Q8EVP2</accession>
<comment type="function">
    <text evidence="1">Specifically methylates the pseudouridine at position 1915 (m3Psi1915) in 23S rRNA.</text>
</comment>
<comment type="catalytic activity">
    <reaction evidence="1">
        <text>pseudouridine(1915) in 23S rRNA + S-adenosyl-L-methionine = N(3)-methylpseudouridine(1915) in 23S rRNA + S-adenosyl-L-homocysteine + H(+)</text>
        <dbReference type="Rhea" id="RHEA:42752"/>
        <dbReference type="Rhea" id="RHEA-COMP:10221"/>
        <dbReference type="Rhea" id="RHEA-COMP:10222"/>
        <dbReference type="ChEBI" id="CHEBI:15378"/>
        <dbReference type="ChEBI" id="CHEBI:57856"/>
        <dbReference type="ChEBI" id="CHEBI:59789"/>
        <dbReference type="ChEBI" id="CHEBI:65314"/>
        <dbReference type="ChEBI" id="CHEBI:74486"/>
        <dbReference type="EC" id="2.1.1.177"/>
    </reaction>
</comment>
<comment type="subunit">
    <text evidence="1">Homodimer.</text>
</comment>
<comment type="subcellular location">
    <subcellularLocation>
        <location evidence="1">Cytoplasm</location>
    </subcellularLocation>
</comment>
<comment type="similarity">
    <text evidence="1">Belongs to the RNA methyltransferase RlmH family.</text>
</comment>
<keyword id="KW-0963">Cytoplasm</keyword>
<keyword id="KW-0489">Methyltransferase</keyword>
<keyword id="KW-1185">Reference proteome</keyword>
<keyword id="KW-0698">rRNA processing</keyword>
<keyword id="KW-0949">S-adenosyl-L-methionine</keyword>
<keyword id="KW-0808">Transferase</keyword>
<organism>
    <name type="scientific">Malacoplasma penetrans (strain HF-2)</name>
    <name type="common">Mycoplasma penetrans</name>
    <dbReference type="NCBI Taxonomy" id="272633"/>
    <lineage>
        <taxon>Bacteria</taxon>
        <taxon>Bacillati</taxon>
        <taxon>Mycoplasmatota</taxon>
        <taxon>Mycoplasmoidales</taxon>
        <taxon>Mycoplasmoidaceae</taxon>
        <taxon>Malacoplasma</taxon>
    </lineage>
</organism>
<name>RLMH_MALP2</name>
<protein>
    <recommendedName>
        <fullName evidence="1">Ribosomal RNA large subunit methyltransferase H</fullName>
        <ecNumber evidence="1">2.1.1.177</ecNumber>
    </recommendedName>
    <alternativeName>
        <fullName evidence="1">23S rRNA (pseudouridine1915-N3)-methyltransferase</fullName>
    </alternativeName>
    <alternativeName>
        <fullName evidence="1">23S rRNA m3Psi1915 methyltransferase</fullName>
    </alternativeName>
    <alternativeName>
        <fullName evidence="1">rRNA (pseudouridine-N3-)-methyltransferase RlmH</fullName>
    </alternativeName>
</protein>
<feature type="chain" id="PRO_0000198147" description="Ribosomal RNA large subunit methyltransferase H">
    <location>
        <begin position="1"/>
        <end position="157"/>
    </location>
</feature>
<feature type="binding site" evidence="1">
    <location>
        <position position="75"/>
    </location>
    <ligand>
        <name>S-adenosyl-L-methionine</name>
        <dbReference type="ChEBI" id="CHEBI:59789"/>
    </ligand>
</feature>
<feature type="binding site" evidence="1">
    <location>
        <position position="106"/>
    </location>
    <ligand>
        <name>S-adenosyl-L-methionine</name>
        <dbReference type="ChEBI" id="CHEBI:59789"/>
    </ligand>
</feature>
<feature type="binding site" evidence="1">
    <location>
        <begin position="125"/>
        <end position="130"/>
    </location>
    <ligand>
        <name>S-adenosyl-L-methionine</name>
        <dbReference type="ChEBI" id="CHEBI:59789"/>
    </ligand>
</feature>